<keyword id="KW-0028">Amino-acid biosynthesis</keyword>
<keyword id="KW-0479">Metal-binding</keyword>
<keyword id="KW-0486">Methionine biosynthesis</keyword>
<keyword id="KW-0489">Methyltransferase</keyword>
<keyword id="KW-1185">Reference proteome</keyword>
<keyword id="KW-0677">Repeat</keyword>
<keyword id="KW-0808">Transferase</keyword>
<keyword id="KW-0862">Zinc</keyword>
<accession>Q73WJ9</accession>
<dbReference type="EC" id="2.1.1.14" evidence="1"/>
<dbReference type="EMBL" id="AE016958">
    <property type="protein sequence ID" value="AAS04978.1"/>
    <property type="molecule type" value="Genomic_DNA"/>
</dbReference>
<dbReference type="RefSeq" id="WP_003875412.1">
    <property type="nucleotide sequence ID" value="NZ_CP106873.1"/>
</dbReference>
<dbReference type="SMR" id="Q73WJ9"/>
<dbReference type="STRING" id="262316.MAP_2661"/>
<dbReference type="KEGG" id="mpa:MAP_2661"/>
<dbReference type="PATRIC" id="fig|262316.17.peg.2827"/>
<dbReference type="eggNOG" id="COG0620">
    <property type="taxonomic scope" value="Bacteria"/>
</dbReference>
<dbReference type="HOGENOM" id="CLU_013175_0_0_11"/>
<dbReference type="UniPathway" id="UPA00051">
    <property type="reaction ID" value="UER00082"/>
</dbReference>
<dbReference type="Proteomes" id="UP000000580">
    <property type="component" value="Chromosome"/>
</dbReference>
<dbReference type="GO" id="GO:0003871">
    <property type="term" value="F:5-methyltetrahydropteroyltriglutamate-homocysteine S-methyltransferase activity"/>
    <property type="evidence" value="ECO:0007669"/>
    <property type="project" value="UniProtKB-UniRule"/>
</dbReference>
<dbReference type="GO" id="GO:0008270">
    <property type="term" value="F:zinc ion binding"/>
    <property type="evidence" value="ECO:0007669"/>
    <property type="project" value="InterPro"/>
</dbReference>
<dbReference type="GO" id="GO:0009086">
    <property type="term" value="P:methionine biosynthetic process"/>
    <property type="evidence" value="ECO:0007669"/>
    <property type="project" value="UniProtKB-UniRule"/>
</dbReference>
<dbReference type="GO" id="GO:0032259">
    <property type="term" value="P:methylation"/>
    <property type="evidence" value="ECO:0007669"/>
    <property type="project" value="UniProtKB-KW"/>
</dbReference>
<dbReference type="CDD" id="cd03311">
    <property type="entry name" value="CIMS_C_terminal_like"/>
    <property type="match status" value="1"/>
</dbReference>
<dbReference type="CDD" id="cd03312">
    <property type="entry name" value="CIMS_N_terminal_like"/>
    <property type="match status" value="1"/>
</dbReference>
<dbReference type="Gene3D" id="3.20.20.210">
    <property type="match status" value="2"/>
</dbReference>
<dbReference type="HAMAP" id="MF_00172">
    <property type="entry name" value="Meth_synth"/>
    <property type="match status" value="1"/>
</dbReference>
<dbReference type="InterPro" id="IPR013215">
    <property type="entry name" value="Cbl-indep_Met_Synth_N"/>
</dbReference>
<dbReference type="InterPro" id="IPR006276">
    <property type="entry name" value="Cobalamin-indep_Met_synthase"/>
</dbReference>
<dbReference type="InterPro" id="IPR002629">
    <property type="entry name" value="Met_Synth_C/arc"/>
</dbReference>
<dbReference type="InterPro" id="IPR038071">
    <property type="entry name" value="UROD/MetE-like_sf"/>
</dbReference>
<dbReference type="NCBIfam" id="TIGR01371">
    <property type="entry name" value="met_syn_B12ind"/>
    <property type="match status" value="1"/>
</dbReference>
<dbReference type="NCBIfam" id="NF003556">
    <property type="entry name" value="PRK05222.1"/>
    <property type="match status" value="1"/>
</dbReference>
<dbReference type="PANTHER" id="PTHR30519">
    <property type="entry name" value="5-METHYLTETRAHYDROPTEROYLTRIGLUTAMATE--HOMOCYSTEINE METHYLTRANSFERASE"/>
    <property type="match status" value="1"/>
</dbReference>
<dbReference type="Pfam" id="PF08267">
    <property type="entry name" value="Meth_synt_1"/>
    <property type="match status" value="1"/>
</dbReference>
<dbReference type="Pfam" id="PF01717">
    <property type="entry name" value="Meth_synt_2"/>
    <property type="match status" value="1"/>
</dbReference>
<dbReference type="PIRSF" id="PIRSF000382">
    <property type="entry name" value="MeTrfase_B12_ind"/>
    <property type="match status" value="1"/>
</dbReference>
<dbReference type="SUPFAM" id="SSF51726">
    <property type="entry name" value="UROD/MetE-like"/>
    <property type="match status" value="2"/>
</dbReference>
<feature type="chain" id="PRO_0000098640" description="5-methyltetrahydropteroyltriglutamate--homocysteine methyltransferase">
    <location>
        <begin position="1"/>
        <end position="756"/>
    </location>
</feature>
<feature type="active site" description="Proton donor" evidence="1">
    <location>
        <position position="696"/>
    </location>
</feature>
<feature type="binding site" evidence="1">
    <location>
        <begin position="20"/>
        <end position="23"/>
    </location>
    <ligand>
        <name>5-methyltetrahydropteroyltri-L-glutamate</name>
        <dbReference type="ChEBI" id="CHEBI:58207"/>
    </ligand>
</feature>
<feature type="binding site" evidence="1">
    <location>
        <position position="114"/>
    </location>
    <ligand>
        <name>5-methyltetrahydropteroyltri-L-glutamate</name>
        <dbReference type="ChEBI" id="CHEBI:58207"/>
    </ligand>
</feature>
<feature type="binding site" evidence="1">
    <location>
        <begin position="433"/>
        <end position="435"/>
    </location>
    <ligand>
        <name>L-homocysteine</name>
        <dbReference type="ChEBI" id="CHEBI:58199"/>
    </ligand>
</feature>
<feature type="binding site" evidence="1">
    <location>
        <begin position="433"/>
        <end position="435"/>
    </location>
    <ligand>
        <name>L-methionine</name>
        <dbReference type="ChEBI" id="CHEBI:57844"/>
    </ligand>
</feature>
<feature type="binding site" evidence="1">
    <location>
        <position position="486"/>
    </location>
    <ligand>
        <name>L-homocysteine</name>
        <dbReference type="ChEBI" id="CHEBI:58199"/>
    </ligand>
</feature>
<feature type="binding site" evidence="1">
    <location>
        <position position="486"/>
    </location>
    <ligand>
        <name>L-methionine</name>
        <dbReference type="ChEBI" id="CHEBI:57844"/>
    </ligand>
</feature>
<feature type="binding site" evidence="1">
    <location>
        <begin position="517"/>
        <end position="518"/>
    </location>
    <ligand>
        <name>5-methyltetrahydropteroyltri-L-glutamate</name>
        <dbReference type="ChEBI" id="CHEBI:58207"/>
    </ligand>
</feature>
<feature type="binding site" evidence="1">
    <location>
        <position position="563"/>
    </location>
    <ligand>
        <name>5-methyltetrahydropteroyltri-L-glutamate</name>
        <dbReference type="ChEBI" id="CHEBI:58207"/>
    </ligand>
</feature>
<feature type="binding site" evidence="1">
    <location>
        <position position="601"/>
    </location>
    <ligand>
        <name>L-homocysteine</name>
        <dbReference type="ChEBI" id="CHEBI:58199"/>
    </ligand>
</feature>
<feature type="binding site" evidence="1">
    <location>
        <position position="601"/>
    </location>
    <ligand>
        <name>L-methionine</name>
        <dbReference type="ChEBI" id="CHEBI:57844"/>
    </ligand>
</feature>
<feature type="binding site" evidence="1">
    <location>
        <position position="607"/>
    </location>
    <ligand>
        <name>5-methyltetrahydropteroyltri-L-glutamate</name>
        <dbReference type="ChEBI" id="CHEBI:58207"/>
    </ligand>
</feature>
<feature type="binding site" evidence="1">
    <location>
        <position position="643"/>
    </location>
    <ligand>
        <name>Zn(2+)</name>
        <dbReference type="ChEBI" id="CHEBI:29105"/>
        <note>catalytic</note>
    </ligand>
</feature>
<feature type="binding site" evidence="1">
    <location>
        <position position="645"/>
    </location>
    <ligand>
        <name>Zn(2+)</name>
        <dbReference type="ChEBI" id="CHEBI:29105"/>
        <note>catalytic</note>
    </ligand>
</feature>
<feature type="binding site" evidence="1">
    <location>
        <position position="667"/>
    </location>
    <ligand>
        <name>Zn(2+)</name>
        <dbReference type="ChEBI" id="CHEBI:29105"/>
        <note>catalytic</note>
    </ligand>
</feature>
<feature type="binding site" evidence="1">
    <location>
        <position position="728"/>
    </location>
    <ligand>
        <name>Zn(2+)</name>
        <dbReference type="ChEBI" id="CHEBI:29105"/>
        <note>catalytic</note>
    </ligand>
</feature>
<sequence length="756" mass="81591">MTPQAFTATVVGSPRIGPKRELKRATEGYWAGRTGRAELEKVAATLRRDTWAGLAAAGLDSVPVNTFSYYDQMLDTAVMLDALPERARQVSDDLDRYFAAARGNSDVAPLEMTKWFDTNYHYIVPEIAPTTKFALNPDKVLSELKEALAQGIPARPVVIGPITFLLLSKGVDGAGAPIERLEELVPIYAELLSLLADNGAQWVQLDEPALVTDMCADAPALAEAVYNKLGSASNRPAIYVATYFGDPGASLAGLARTPVEAIGVDLVYGPDTAVAAVPELAGKTVVAGVVDGRNVWRTDLAAALDKLTTLLGSAARVAVSTSCSTLHVPYSLEPETDLDDALRSWLAFGREKVAEVVTLARALRDGREAVADEIAASNAAVASRKSDPRLHNDRVRARIDSIVASGSHRGDPAQRRASQDARLHLPPLPTTTIGSYPQTSAIRKARAALRSGEIDQAEYERRMKKEIADVITLQEQLGLDVLVHGEPERNDMVQYFAEQLEGFFATQNGWVQSYGSRCVRPPILYGDVVRTHPMTVEWISYAQSLTDKPVKGMLTGPVTILAWSFVRDDQPLADTANQVALAIRDETVDLQAAGIAVIQVDEPALRELLPLRRADQDEYLRWAVGAFRLATSGVADSTQIHTHLCYSEFGEVIGAIADLDADVTSLEAARSHMEVLDDLNAVGFSNSVGPGVYDIHSPRVPSTAEIAESLRAALRAVPAERLWVNPDCGLKTRNPDEVSASLKNMVAAAHEVRAGV</sequence>
<evidence type="ECO:0000255" key="1">
    <source>
        <dbReference type="HAMAP-Rule" id="MF_00172"/>
    </source>
</evidence>
<name>METE_MYCPA</name>
<comment type="function">
    <text evidence="1">Catalyzes the transfer of a methyl group from 5-methyltetrahydrofolate to homocysteine resulting in methionine formation.</text>
</comment>
<comment type="catalytic activity">
    <reaction evidence="1">
        <text>5-methyltetrahydropteroyltri-L-glutamate + L-homocysteine = tetrahydropteroyltri-L-glutamate + L-methionine</text>
        <dbReference type="Rhea" id="RHEA:21196"/>
        <dbReference type="ChEBI" id="CHEBI:57844"/>
        <dbReference type="ChEBI" id="CHEBI:58140"/>
        <dbReference type="ChEBI" id="CHEBI:58199"/>
        <dbReference type="ChEBI" id="CHEBI:58207"/>
        <dbReference type="EC" id="2.1.1.14"/>
    </reaction>
</comment>
<comment type="cofactor">
    <cofactor evidence="1">
        <name>Zn(2+)</name>
        <dbReference type="ChEBI" id="CHEBI:29105"/>
    </cofactor>
    <text evidence="1">Binds 1 zinc ion per subunit.</text>
</comment>
<comment type="pathway">
    <text evidence="1">Amino-acid biosynthesis; L-methionine biosynthesis via de novo pathway; L-methionine from L-homocysteine (MetE route): step 1/1.</text>
</comment>
<comment type="similarity">
    <text evidence="1">Belongs to the vitamin-B12 independent methionine synthase family.</text>
</comment>
<proteinExistence type="inferred from homology"/>
<gene>
    <name evidence="1" type="primary">metE</name>
    <name type="ordered locus">MAP_2661</name>
</gene>
<organism>
    <name type="scientific">Mycolicibacterium paratuberculosis (strain ATCC BAA-968 / K-10)</name>
    <name type="common">Mycobacterium paratuberculosis</name>
    <dbReference type="NCBI Taxonomy" id="262316"/>
    <lineage>
        <taxon>Bacteria</taxon>
        <taxon>Bacillati</taxon>
        <taxon>Actinomycetota</taxon>
        <taxon>Actinomycetes</taxon>
        <taxon>Mycobacteriales</taxon>
        <taxon>Mycobacteriaceae</taxon>
        <taxon>Mycobacterium</taxon>
        <taxon>Mycobacterium avium complex (MAC)</taxon>
    </lineage>
</organism>
<protein>
    <recommendedName>
        <fullName evidence="1">5-methyltetrahydropteroyltriglutamate--homocysteine methyltransferase</fullName>
        <ecNumber evidence="1">2.1.1.14</ecNumber>
    </recommendedName>
    <alternativeName>
        <fullName evidence="1">Cobalamin-independent methionine synthase</fullName>
    </alternativeName>
    <alternativeName>
        <fullName evidence="1">Methionine synthase, vitamin-B12 independent isozyme</fullName>
    </alternativeName>
</protein>
<reference key="1">
    <citation type="journal article" date="2005" name="Proc. Natl. Acad. Sci. U.S.A.">
        <title>The complete genome sequence of Mycobacterium avium subspecies paratuberculosis.</title>
        <authorList>
            <person name="Li L."/>
            <person name="Bannantine J.P."/>
            <person name="Zhang Q."/>
            <person name="Amonsin A."/>
            <person name="May B.J."/>
            <person name="Alt D."/>
            <person name="Banerji N."/>
            <person name="Kanjilal S."/>
            <person name="Kapur V."/>
        </authorList>
    </citation>
    <scope>NUCLEOTIDE SEQUENCE [LARGE SCALE GENOMIC DNA]</scope>
    <source>
        <strain>ATCC BAA-968 / K-10</strain>
    </source>
</reference>